<gene>
    <name type="primary">SIFV0033</name>
</gene>
<evidence type="ECO:0000255" key="1"/>
<sequence>MSEQKPEQDVNKKIEELEKKVQELQEQLEKTKQAVKTVASILDNHLKGQWTLEDVKIAITHINEMVQLLTQSGIIRPGSEGSGNWLQMMLAQQFMQQKQAQQSQDVQIEPLKKKNKKKLKKFLDEEAEEEE</sequence>
<reference key="1">
    <citation type="journal article" date="2000" name="Virology">
        <title>A novel lipothrixvirus, SIFV, of the extremely thermophilic crenarchaeon Sulfolobus.</title>
        <authorList>
            <person name="Arnold H.P."/>
            <person name="Zillig W."/>
            <person name="Ziese U."/>
            <person name="Holz I."/>
            <person name="Crosby M."/>
            <person name="Utterback T."/>
            <person name="Weidmann J.F."/>
            <person name="Umayam L.A."/>
            <person name="Teffera K."/>
            <person name="Kristjanson J.K."/>
            <person name="Klenk H.P."/>
            <person name="Nelson K.E."/>
            <person name="Fraser C.M."/>
        </authorList>
    </citation>
    <scope>NUCLEOTIDE SEQUENCE [GENOMIC DNA]</scope>
</reference>
<proteinExistence type="predicted"/>
<feature type="chain" id="PRO_0000385424" description="Uncharacterized protein 33">
    <location>
        <begin position="1"/>
        <end position="131"/>
    </location>
</feature>
<feature type="coiled-coil region" evidence="1">
    <location>
        <begin position="4"/>
        <end position="44"/>
    </location>
</feature>
<accession>Q914J7</accession>
<organism>
    <name type="scientific">Sulfolobus islandicus filamentous virus (isolate Iceland/Hveragerdi)</name>
    <name type="common">SIFV</name>
    <dbReference type="NCBI Taxonomy" id="654908"/>
    <lineage>
        <taxon>Viruses</taxon>
        <taxon>Adnaviria</taxon>
        <taxon>Zilligvirae</taxon>
        <taxon>Taleaviricota</taxon>
        <taxon>Tokiviricetes</taxon>
        <taxon>Ligamenvirales</taxon>
        <taxon>Lipothrixviridae</taxon>
        <taxon>Betalipothrixvirus</taxon>
        <taxon>Sulfolobus islandicus filamentous virus</taxon>
    </lineage>
</organism>
<keyword id="KW-0175">Coiled coil</keyword>
<keyword id="KW-1185">Reference proteome</keyword>
<dbReference type="EMBL" id="AF440571">
    <property type="protein sequence ID" value="AAL27744.1"/>
    <property type="molecule type" value="Genomic_DNA"/>
</dbReference>
<dbReference type="RefSeq" id="NP_445698.1">
    <property type="nucleotide sequence ID" value="NC_003214.2"/>
</dbReference>
<dbReference type="SMR" id="Q914J7"/>
<dbReference type="GeneID" id="922286"/>
<dbReference type="KEGG" id="vg:922286"/>
<dbReference type="Proteomes" id="UP000007017">
    <property type="component" value="Segment"/>
</dbReference>
<dbReference type="InterPro" id="IPR035338">
    <property type="entry name" value="KleA/KleC-like"/>
</dbReference>
<dbReference type="Pfam" id="PF17383">
    <property type="entry name" value="kleA_kleC"/>
    <property type="match status" value="1"/>
</dbReference>
<name>Y033_SIFVH</name>
<protein>
    <recommendedName>
        <fullName>Uncharacterized protein 33</fullName>
    </recommendedName>
</protein>
<organismHost>
    <name type="scientific">Saccharolobus islandicus</name>
    <name type="common">Sulfolobus islandicus</name>
    <dbReference type="NCBI Taxonomy" id="43080"/>
</organismHost>